<sequence length="307" mass="32987">MRGQPRPKLRRMTEQQTGTPQLKQGFAEMFKGGVIMDVVTADQARIAEAAGATAVMALERVPADIRKDGGVARMSDPKMIREIMAAVSIPVMAKVRIGHVVEAQILQAIGVDFIDESEVLTPADEQFHILKRDFKVPFVCGAKNLGEALRRVGEGASMIRTKGEAGTGNVVEAVRHARAVLGDIRAVQSRPAEELMTVARDLQAPYDLVQYVHAHGQLPVVNFAAGGVATPADAALMMQLGLDGVFVGSGIFKSANPERRAQAIVRAVTHFQNPDILAEVSEDLGAPMTGINIDELIPEARLASRGW</sequence>
<organism>
    <name type="scientific">Deinococcus radiodurans (strain ATCC 13939 / DSM 20539 / JCM 16871 / CCUG 27074 / LMG 4051 / NBRC 15346 / NCIMB 9279 / VKM B-1422 / R1)</name>
    <dbReference type="NCBI Taxonomy" id="243230"/>
    <lineage>
        <taxon>Bacteria</taxon>
        <taxon>Thermotogati</taxon>
        <taxon>Deinococcota</taxon>
        <taxon>Deinococci</taxon>
        <taxon>Deinococcales</taxon>
        <taxon>Deinococcaceae</taxon>
        <taxon>Deinococcus</taxon>
    </lineage>
</organism>
<proteinExistence type="inferred from homology"/>
<name>PDXS_DEIRA</name>
<evidence type="ECO:0000255" key="1">
    <source>
        <dbReference type="HAMAP-Rule" id="MF_01824"/>
    </source>
</evidence>
<evidence type="ECO:0000256" key="2">
    <source>
        <dbReference type="SAM" id="MobiDB-lite"/>
    </source>
</evidence>
<accession>Q9RUL7</accession>
<comment type="function">
    <text evidence="1">Catalyzes the formation of pyridoxal 5'-phosphate from ribose 5-phosphate (RBP), glyceraldehyde 3-phosphate (G3P) and ammonia. The ammonia is provided by the PdxT subunit. Can also use ribulose 5-phosphate and dihydroxyacetone phosphate as substrates, resulting from enzyme-catalyzed isomerization of RBP and G3P, respectively.</text>
</comment>
<comment type="catalytic activity">
    <reaction evidence="1">
        <text>aldehydo-D-ribose 5-phosphate + D-glyceraldehyde 3-phosphate + L-glutamine = pyridoxal 5'-phosphate + L-glutamate + phosphate + 3 H2O + H(+)</text>
        <dbReference type="Rhea" id="RHEA:31507"/>
        <dbReference type="ChEBI" id="CHEBI:15377"/>
        <dbReference type="ChEBI" id="CHEBI:15378"/>
        <dbReference type="ChEBI" id="CHEBI:29985"/>
        <dbReference type="ChEBI" id="CHEBI:43474"/>
        <dbReference type="ChEBI" id="CHEBI:58273"/>
        <dbReference type="ChEBI" id="CHEBI:58359"/>
        <dbReference type="ChEBI" id="CHEBI:59776"/>
        <dbReference type="ChEBI" id="CHEBI:597326"/>
        <dbReference type="EC" id="4.3.3.6"/>
    </reaction>
</comment>
<comment type="pathway">
    <text evidence="1">Cofactor biosynthesis; pyridoxal 5'-phosphate biosynthesis.</text>
</comment>
<comment type="subunit">
    <text evidence="1">In the presence of PdxT, forms a dodecamer of heterodimers.</text>
</comment>
<comment type="similarity">
    <text evidence="1">Belongs to the PdxS/SNZ family.</text>
</comment>
<dbReference type="EC" id="4.3.3.6" evidence="1"/>
<dbReference type="EMBL" id="AE000513">
    <property type="protein sequence ID" value="AAF10938.1"/>
    <property type="molecule type" value="Genomic_DNA"/>
</dbReference>
<dbReference type="PIR" id="H75405">
    <property type="entry name" value="H75405"/>
</dbReference>
<dbReference type="RefSeq" id="NP_295090.1">
    <property type="nucleotide sequence ID" value="NC_001263.1"/>
</dbReference>
<dbReference type="SMR" id="Q9RUL7"/>
<dbReference type="FunCoup" id="Q9RUL7">
    <property type="interactions" value="240"/>
</dbReference>
<dbReference type="STRING" id="243230.DR_1367"/>
<dbReference type="PaxDb" id="243230-DR_1367"/>
<dbReference type="EnsemblBacteria" id="AAF10938">
    <property type="protein sequence ID" value="AAF10938"/>
    <property type="gene ID" value="DR_1367"/>
</dbReference>
<dbReference type="KEGG" id="dra:DR_1367"/>
<dbReference type="PATRIC" id="fig|243230.17.peg.1564"/>
<dbReference type="eggNOG" id="COG0214">
    <property type="taxonomic scope" value="Bacteria"/>
</dbReference>
<dbReference type="HOGENOM" id="CLU_055352_1_0_0"/>
<dbReference type="InParanoid" id="Q9RUL7"/>
<dbReference type="OrthoDB" id="9772545at2"/>
<dbReference type="UniPathway" id="UPA00245"/>
<dbReference type="Proteomes" id="UP000002524">
    <property type="component" value="Chromosome 1"/>
</dbReference>
<dbReference type="GO" id="GO:0016843">
    <property type="term" value="F:amine-lyase activity"/>
    <property type="evidence" value="ECO:0000318"/>
    <property type="project" value="GO_Central"/>
</dbReference>
<dbReference type="GO" id="GO:0036381">
    <property type="term" value="F:pyridoxal 5'-phosphate synthase (glutamine hydrolysing) activity"/>
    <property type="evidence" value="ECO:0007669"/>
    <property type="project" value="UniProtKB-UniRule"/>
</dbReference>
<dbReference type="GO" id="GO:0006520">
    <property type="term" value="P:amino acid metabolic process"/>
    <property type="evidence" value="ECO:0000318"/>
    <property type="project" value="GO_Central"/>
</dbReference>
<dbReference type="GO" id="GO:0042823">
    <property type="term" value="P:pyridoxal phosphate biosynthetic process"/>
    <property type="evidence" value="ECO:0000318"/>
    <property type="project" value="GO_Central"/>
</dbReference>
<dbReference type="GO" id="GO:0008615">
    <property type="term" value="P:pyridoxine biosynthetic process"/>
    <property type="evidence" value="ECO:0000318"/>
    <property type="project" value="GO_Central"/>
</dbReference>
<dbReference type="CDD" id="cd04727">
    <property type="entry name" value="pdxS"/>
    <property type="match status" value="1"/>
</dbReference>
<dbReference type="FunFam" id="3.20.20.70:FF:000001">
    <property type="entry name" value="Pyridoxine biosynthesis protein PDX1"/>
    <property type="match status" value="1"/>
</dbReference>
<dbReference type="Gene3D" id="3.20.20.70">
    <property type="entry name" value="Aldolase class I"/>
    <property type="match status" value="1"/>
</dbReference>
<dbReference type="HAMAP" id="MF_01824">
    <property type="entry name" value="PdxS"/>
    <property type="match status" value="1"/>
</dbReference>
<dbReference type="InterPro" id="IPR013785">
    <property type="entry name" value="Aldolase_TIM"/>
</dbReference>
<dbReference type="InterPro" id="IPR001852">
    <property type="entry name" value="PdxS/SNZ"/>
</dbReference>
<dbReference type="InterPro" id="IPR033755">
    <property type="entry name" value="PdxS/SNZ_N"/>
</dbReference>
<dbReference type="InterPro" id="IPR011060">
    <property type="entry name" value="RibuloseP-bd_barrel"/>
</dbReference>
<dbReference type="NCBIfam" id="NF003215">
    <property type="entry name" value="PRK04180.1"/>
    <property type="match status" value="1"/>
</dbReference>
<dbReference type="NCBIfam" id="TIGR00343">
    <property type="entry name" value="pyridoxal 5'-phosphate synthase lyase subunit PdxS"/>
    <property type="match status" value="1"/>
</dbReference>
<dbReference type="PANTHER" id="PTHR31829">
    <property type="entry name" value="PYRIDOXAL 5'-PHOSPHATE SYNTHASE SUBUNIT SNZ1-RELATED"/>
    <property type="match status" value="1"/>
</dbReference>
<dbReference type="PANTHER" id="PTHR31829:SF0">
    <property type="entry name" value="PYRIDOXAL 5'-PHOSPHATE SYNTHASE SUBUNIT SNZ1-RELATED"/>
    <property type="match status" value="1"/>
</dbReference>
<dbReference type="Pfam" id="PF01680">
    <property type="entry name" value="SOR_SNZ"/>
    <property type="match status" value="1"/>
</dbReference>
<dbReference type="PIRSF" id="PIRSF029271">
    <property type="entry name" value="Pdx1"/>
    <property type="match status" value="1"/>
</dbReference>
<dbReference type="SUPFAM" id="SSF51366">
    <property type="entry name" value="Ribulose-phoshate binding barrel"/>
    <property type="match status" value="1"/>
</dbReference>
<dbReference type="PROSITE" id="PS01235">
    <property type="entry name" value="PDXS_SNZ_1"/>
    <property type="match status" value="1"/>
</dbReference>
<dbReference type="PROSITE" id="PS51129">
    <property type="entry name" value="PDXS_SNZ_2"/>
    <property type="match status" value="1"/>
</dbReference>
<gene>
    <name evidence="1" type="primary">pdxS</name>
    <name type="ordered locus">DR_1367</name>
</gene>
<reference key="1">
    <citation type="journal article" date="1999" name="Science">
        <title>Genome sequence of the radioresistant bacterium Deinococcus radiodurans R1.</title>
        <authorList>
            <person name="White O."/>
            <person name="Eisen J.A."/>
            <person name="Heidelberg J.F."/>
            <person name="Hickey E.K."/>
            <person name="Peterson J.D."/>
            <person name="Dodson R.J."/>
            <person name="Haft D.H."/>
            <person name="Gwinn M.L."/>
            <person name="Nelson W.C."/>
            <person name="Richardson D.L."/>
            <person name="Moffat K.S."/>
            <person name="Qin H."/>
            <person name="Jiang L."/>
            <person name="Pamphile W."/>
            <person name="Crosby M."/>
            <person name="Shen M."/>
            <person name="Vamathevan J.J."/>
            <person name="Lam P."/>
            <person name="McDonald L.A."/>
            <person name="Utterback T.R."/>
            <person name="Zalewski C."/>
            <person name="Makarova K.S."/>
            <person name="Aravind L."/>
            <person name="Daly M.J."/>
            <person name="Minton K.W."/>
            <person name="Fleischmann R.D."/>
            <person name="Ketchum K.A."/>
            <person name="Nelson K.E."/>
            <person name="Salzberg S.L."/>
            <person name="Smith H.O."/>
            <person name="Venter J.C."/>
            <person name="Fraser C.M."/>
        </authorList>
    </citation>
    <scope>NUCLEOTIDE SEQUENCE [LARGE SCALE GENOMIC DNA]</scope>
    <source>
        <strain>ATCC 13939 / DSM 20539 / JCM 16871 / CCUG 27074 / LMG 4051 / NBRC 15346 / NCIMB 9279 / VKM B-1422 / R1</strain>
    </source>
</reference>
<protein>
    <recommendedName>
        <fullName evidence="1">Pyridoxal 5'-phosphate synthase subunit PdxS</fullName>
        <shortName evidence="1">PLP synthase subunit PdxS</shortName>
        <ecNumber evidence="1">4.3.3.6</ecNumber>
    </recommendedName>
    <alternativeName>
        <fullName evidence="1">Pdx1</fullName>
    </alternativeName>
</protein>
<feature type="chain" id="PRO_0000109391" description="Pyridoxal 5'-phosphate synthase subunit PdxS">
    <location>
        <begin position="1"/>
        <end position="307"/>
    </location>
</feature>
<feature type="region of interest" description="Disordered" evidence="2">
    <location>
        <begin position="1"/>
        <end position="20"/>
    </location>
</feature>
<feature type="compositionally biased region" description="Basic residues" evidence="2">
    <location>
        <begin position="1"/>
        <end position="10"/>
    </location>
</feature>
<feature type="active site" description="Schiff-base intermediate with D-ribose 5-phosphate" evidence="1">
    <location>
        <position position="94"/>
    </location>
</feature>
<feature type="binding site" evidence="1">
    <location>
        <position position="37"/>
    </location>
    <ligand>
        <name>D-ribose 5-phosphate</name>
        <dbReference type="ChEBI" id="CHEBI:78346"/>
    </ligand>
</feature>
<feature type="binding site" evidence="1">
    <location>
        <position position="166"/>
    </location>
    <ligand>
        <name>D-ribose 5-phosphate</name>
        <dbReference type="ChEBI" id="CHEBI:78346"/>
    </ligand>
</feature>
<feature type="binding site" evidence="1">
    <location>
        <position position="178"/>
    </location>
    <ligand>
        <name>D-glyceraldehyde 3-phosphate</name>
        <dbReference type="ChEBI" id="CHEBI:59776"/>
    </ligand>
</feature>
<feature type="binding site" evidence="1">
    <location>
        <position position="227"/>
    </location>
    <ligand>
        <name>D-ribose 5-phosphate</name>
        <dbReference type="ChEBI" id="CHEBI:78346"/>
    </ligand>
</feature>
<feature type="binding site" evidence="1">
    <location>
        <begin position="248"/>
        <end position="249"/>
    </location>
    <ligand>
        <name>D-ribose 5-phosphate</name>
        <dbReference type="ChEBI" id="CHEBI:78346"/>
    </ligand>
</feature>
<keyword id="KW-0456">Lyase</keyword>
<keyword id="KW-0663">Pyridoxal phosphate</keyword>
<keyword id="KW-1185">Reference proteome</keyword>
<keyword id="KW-0704">Schiff base</keyword>